<evidence type="ECO:0000255" key="1">
    <source>
        <dbReference type="HAMAP-Rule" id="MF_01456"/>
    </source>
</evidence>
<reference key="1">
    <citation type="journal article" date="2002" name="J. Bacteriol.">
        <title>Genome sequence of Yersinia pestis KIM.</title>
        <authorList>
            <person name="Deng W."/>
            <person name="Burland V."/>
            <person name="Plunkett G. III"/>
            <person name="Boutin A."/>
            <person name="Mayhew G.F."/>
            <person name="Liss P."/>
            <person name="Perna N.T."/>
            <person name="Rose D.J."/>
            <person name="Mau B."/>
            <person name="Zhou S."/>
            <person name="Schwartz D.C."/>
            <person name="Fetherston J.D."/>
            <person name="Lindler L.E."/>
            <person name="Brubaker R.R."/>
            <person name="Plano G.V."/>
            <person name="Straley S.C."/>
            <person name="McDonough K.A."/>
            <person name="Nilles M.L."/>
            <person name="Matson J.S."/>
            <person name="Blattner F.R."/>
            <person name="Perry R.D."/>
        </authorList>
    </citation>
    <scope>NUCLEOTIDE SEQUENCE [LARGE SCALE GENOMIC DNA]</scope>
    <source>
        <strain>KIM10+ / Biovar Mediaevalis</strain>
    </source>
</reference>
<reference key="2">
    <citation type="journal article" date="2001" name="Nature">
        <title>Genome sequence of Yersinia pestis, the causative agent of plague.</title>
        <authorList>
            <person name="Parkhill J."/>
            <person name="Wren B.W."/>
            <person name="Thomson N.R."/>
            <person name="Titball R.W."/>
            <person name="Holden M.T.G."/>
            <person name="Prentice M.B."/>
            <person name="Sebaihia M."/>
            <person name="James K.D."/>
            <person name="Churcher C.M."/>
            <person name="Mungall K.L."/>
            <person name="Baker S."/>
            <person name="Basham D."/>
            <person name="Bentley S.D."/>
            <person name="Brooks K."/>
            <person name="Cerdeno-Tarraga A.-M."/>
            <person name="Chillingworth T."/>
            <person name="Cronin A."/>
            <person name="Davies R.M."/>
            <person name="Davis P."/>
            <person name="Dougan G."/>
            <person name="Feltwell T."/>
            <person name="Hamlin N."/>
            <person name="Holroyd S."/>
            <person name="Jagels K."/>
            <person name="Karlyshev A.V."/>
            <person name="Leather S."/>
            <person name="Moule S."/>
            <person name="Oyston P.C.F."/>
            <person name="Quail M.A."/>
            <person name="Rutherford K.M."/>
            <person name="Simmonds M."/>
            <person name="Skelton J."/>
            <person name="Stevens K."/>
            <person name="Whitehead S."/>
            <person name="Barrell B.G."/>
        </authorList>
    </citation>
    <scope>NUCLEOTIDE SEQUENCE [LARGE SCALE GENOMIC DNA]</scope>
    <source>
        <strain>CO-92 / Biovar Orientalis</strain>
    </source>
</reference>
<reference key="3">
    <citation type="journal article" date="2004" name="DNA Res.">
        <title>Complete genome sequence of Yersinia pestis strain 91001, an isolate avirulent to humans.</title>
        <authorList>
            <person name="Song Y."/>
            <person name="Tong Z."/>
            <person name="Wang J."/>
            <person name="Wang L."/>
            <person name="Guo Z."/>
            <person name="Han Y."/>
            <person name="Zhang J."/>
            <person name="Pei D."/>
            <person name="Zhou D."/>
            <person name="Qin H."/>
            <person name="Pang X."/>
            <person name="Han Y."/>
            <person name="Zhai J."/>
            <person name="Li M."/>
            <person name="Cui B."/>
            <person name="Qi Z."/>
            <person name="Jin L."/>
            <person name="Dai R."/>
            <person name="Chen F."/>
            <person name="Li S."/>
            <person name="Ye C."/>
            <person name="Du Z."/>
            <person name="Lin W."/>
            <person name="Wang J."/>
            <person name="Yu J."/>
            <person name="Yang H."/>
            <person name="Wang J."/>
            <person name="Huang P."/>
            <person name="Yang R."/>
        </authorList>
    </citation>
    <scope>NUCLEOTIDE SEQUENCE [LARGE SCALE GENOMIC DNA]</scope>
    <source>
        <strain>91001 / Biovar Mediaevalis</strain>
    </source>
</reference>
<accession>Q7CJ87</accession>
<accession>Q74T35</accession>
<feature type="chain" id="PRO_0000390283" description="NADH-quinone oxidoreductase subunit K">
    <location>
        <begin position="1"/>
        <end position="100"/>
    </location>
</feature>
<feature type="transmembrane region" description="Helical" evidence="1">
    <location>
        <begin position="4"/>
        <end position="24"/>
    </location>
</feature>
<feature type="transmembrane region" description="Helical" evidence="1">
    <location>
        <begin position="28"/>
        <end position="48"/>
    </location>
</feature>
<feature type="transmembrane region" description="Helical" evidence="1">
    <location>
        <begin position="60"/>
        <end position="80"/>
    </location>
</feature>
<sequence>MIPLQHGLILAAILFVLGLTGLLIRRNLLFMLISLEVMINAAALAFVVAGSYWGQADGQVMYILAITLAAAEASIGLALLLQLYRRRHTLDIDTVSEMRG</sequence>
<name>NUOK_YERPE</name>
<gene>
    <name evidence="1" type="primary">nuoK</name>
    <name type="ordered locus">YPO2546</name>
    <name type="ordered locus">y1639</name>
    <name type="ordered locus">YP_2357</name>
</gene>
<protein>
    <recommendedName>
        <fullName evidence="1">NADH-quinone oxidoreductase subunit K</fullName>
        <ecNumber evidence="1">7.1.1.-</ecNumber>
    </recommendedName>
    <alternativeName>
        <fullName evidence="1">NADH dehydrogenase I subunit K</fullName>
    </alternativeName>
    <alternativeName>
        <fullName evidence="1">NDH-1 subunit K</fullName>
    </alternativeName>
</protein>
<dbReference type="EC" id="7.1.1.-" evidence="1"/>
<dbReference type="EMBL" id="AE009952">
    <property type="protein sequence ID" value="AAM85208.1"/>
    <property type="molecule type" value="Genomic_DNA"/>
</dbReference>
<dbReference type="EMBL" id="AE017042">
    <property type="protein sequence ID" value="AAS62562.1"/>
    <property type="molecule type" value="Genomic_DNA"/>
</dbReference>
<dbReference type="EMBL" id="AL590842">
    <property type="protein sequence ID" value="CAL21171.1"/>
    <property type="molecule type" value="Genomic_DNA"/>
</dbReference>
<dbReference type="PIR" id="AH0310">
    <property type="entry name" value="AH0310"/>
</dbReference>
<dbReference type="RefSeq" id="WP_002210271.1">
    <property type="nucleotide sequence ID" value="NZ_WUCM01000021.1"/>
</dbReference>
<dbReference type="RefSeq" id="YP_002347507.1">
    <property type="nucleotide sequence ID" value="NC_003143.1"/>
</dbReference>
<dbReference type="SMR" id="Q7CJ87"/>
<dbReference type="STRING" id="214092.YPO2546"/>
<dbReference type="PaxDb" id="214092-YPO2546"/>
<dbReference type="DNASU" id="1146586"/>
<dbReference type="EnsemblBacteria" id="AAS62562">
    <property type="protein sequence ID" value="AAS62562"/>
    <property type="gene ID" value="YP_2357"/>
</dbReference>
<dbReference type="GeneID" id="96666077"/>
<dbReference type="KEGG" id="ype:YPO2546"/>
<dbReference type="KEGG" id="ypk:y1639"/>
<dbReference type="KEGG" id="ypm:YP_2357"/>
<dbReference type="PATRIC" id="fig|214092.21.peg.2970"/>
<dbReference type="eggNOG" id="COG0713">
    <property type="taxonomic scope" value="Bacteria"/>
</dbReference>
<dbReference type="HOGENOM" id="CLU_144724_0_1_6"/>
<dbReference type="OMA" id="IPMEHGL"/>
<dbReference type="OrthoDB" id="9801357at2"/>
<dbReference type="Proteomes" id="UP000000815">
    <property type="component" value="Chromosome"/>
</dbReference>
<dbReference type="Proteomes" id="UP000001019">
    <property type="component" value="Chromosome"/>
</dbReference>
<dbReference type="Proteomes" id="UP000002490">
    <property type="component" value="Chromosome"/>
</dbReference>
<dbReference type="GO" id="GO:0030964">
    <property type="term" value="C:NADH dehydrogenase complex"/>
    <property type="evidence" value="ECO:0000318"/>
    <property type="project" value="GO_Central"/>
</dbReference>
<dbReference type="GO" id="GO:0005886">
    <property type="term" value="C:plasma membrane"/>
    <property type="evidence" value="ECO:0007669"/>
    <property type="project" value="UniProtKB-SubCell"/>
</dbReference>
<dbReference type="GO" id="GO:0050136">
    <property type="term" value="F:NADH:ubiquinone reductase (non-electrogenic) activity"/>
    <property type="evidence" value="ECO:0007669"/>
    <property type="project" value="UniProtKB-UniRule"/>
</dbReference>
<dbReference type="GO" id="GO:0048038">
    <property type="term" value="F:quinone binding"/>
    <property type="evidence" value="ECO:0007669"/>
    <property type="project" value="UniProtKB-KW"/>
</dbReference>
<dbReference type="GO" id="GO:0042773">
    <property type="term" value="P:ATP synthesis coupled electron transport"/>
    <property type="evidence" value="ECO:0007669"/>
    <property type="project" value="InterPro"/>
</dbReference>
<dbReference type="FunFam" id="1.10.287.3510:FF:000001">
    <property type="entry name" value="NADH-quinone oxidoreductase subunit K"/>
    <property type="match status" value="1"/>
</dbReference>
<dbReference type="Gene3D" id="1.10.287.3510">
    <property type="match status" value="1"/>
</dbReference>
<dbReference type="HAMAP" id="MF_01456">
    <property type="entry name" value="NDH1_NuoK"/>
    <property type="match status" value="1"/>
</dbReference>
<dbReference type="InterPro" id="IPR001133">
    <property type="entry name" value="NADH_UbQ_OxRdtase_chain4L/K"/>
</dbReference>
<dbReference type="InterPro" id="IPR039428">
    <property type="entry name" value="NUOK/Mnh_C1-like"/>
</dbReference>
<dbReference type="NCBIfam" id="NF004319">
    <property type="entry name" value="PRK05715.1-1"/>
    <property type="match status" value="1"/>
</dbReference>
<dbReference type="NCBIfam" id="NF004320">
    <property type="entry name" value="PRK05715.1-2"/>
    <property type="match status" value="1"/>
</dbReference>
<dbReference type="PANTHER" id="PTHR11434:SF16">
    <property type="entry name" value="NADH-UBIQUINONE OXIDOREDUCTASE CHAIN 4L"/>
    <property type="match status" value="1"/>
</dbReference>
<dbReference type="PANTHER" id="PTHR11434">
    <property type="entry name" value="NADH-UBIQUINONE OXIDOREDUCTASE SUBUNIT ND4L"/>
    <property type="match status" value="1"/>
</dbReference>
<dbReference type="Pfam" id="PF00420">
    <property type="entry name" value="Oxidored_q2"/>
    <property type="match status" value="1"/>
</dbReference>
<keyword id="KW-0997">Cell inner membrane</keyword>
<keyword id="KW-1003">Cell membrane</keyword>
<keyword id="KW-0472">Membrane</keyword>
<keyword id="KW-0520">NAD</keyword>
<keyword id="KW-0874">Quinone</keyword>
<keyword id="KW-1185">Reference proteome</keyword>
<keyword id="KW-1278">Translocase</keyword>
<keyword id="KW-0812">Transmembrane</keyword>
<keyword id="KW-1133">Transmembrane helix</keyword>
<keyword id="KW-0813">Transport</keyword>
<keyword id="KW-0830">Ubiquinone</keyword>
<organism>
    <name type="scientific">Yersinia pestis</name>
    <dbReference type="NCBI Taxonomy" id="632"/>
    <lineage>
        <taxon>Bacteria</taxon>
        <taxon>Pseudomonadati</taxon>
        <taxon>Pseudomonadota</taxon>
        <taxon>Gammaproteobacteria</taxon>
        <taxon>Enterobacterales</taxon>
        <taxon>Yersiniaceae</taxon>
        <taxon>Yersinia</taxon>
    </lineage>
</organism>
<proteinExistence type="inferred from homology"/>
<comment type="function">
    <text evidence="1">NDH-1 shuttles electrons from NADH, via FMN and iron-sulfur (Fe-S) centers, to quinones in the respiratory chain. The immediate electron acceptor for the enzyme in this species is believed to be ubiquinone. Couples the redox reaction to proton translocation (for every two electrons transferred, four hydrogen ions are translocated across the cytoplasmic membrane), and thus conserves the redox energy in a proton gradient.</text>
</comment>
<comment type="catalytic activity">
    <reaction evidence="1">
        <text>a quinone + NADH + 5 H(+)(in) = a quinol + NAD(+) + 4 H(+)(out)</text>
        <dbReference type="Rhea" id="RHEA:57888"/>
        <dbReference type="ChEBI" id="CHEBI:15378"/>
        <dbReference type="ChEBI" id="CHEBI:24646"/>
        <dbReference type="ChEBI" id="CHEBI:57540"/>
        <dbReference type="ChEBI" id="CHEBI:57945"/>
        <dbReference type="ChEBI" id="CHEBI:132124"/>
    </reaction>
</comment>
<comment type="subunit">
    <text evidence="1">NDH-1 is composed of 13 different subunits. Subunits NuoA, H, J, K, L, M, N constitute the membrane sector of the complex.</text>
</comment>
<comment type="subcellular location">
    <subcellularLocation>
        <location evidence="1">Cell inner membrane</location>
        <topology evidence="1">Multi-pass membrane protein</topology>
    </subcellularLocation>
</comment>
<comment type="similarity">
    <text evidence="1">Belongs to the complex I subunit 4L family.</text>
</comment>